<name>SYT_HAEIE</name>
<gene>
    <name evidence="1" type="primary">thrS</name>
    <name type="ordered locus">CGSHiEE_04375</name>
</gene>
<organism>
    <name type="scientific">Haemophilus influenzae (strain PittEE)</name>
    <dbReference type="NCBI Taxonomy" id="374930"/>
    <lineage>
        <taxon>Bacteria</taxon>
        <taxon>Pseudomonadati</taxon>
        <taxon>Pseudomonadota</taxon>
        <taxon>Gammaproteobacteria</taxon>
        <taxon>Pasteurellales</taxon>
        <taxon>Pasteurellaceae</taxon>
        <taxon>Haemophilus</taxon>
    </lineage>
</organism>
<proteinExistence type="inferred from homology"/>
<dbReference type="EC" id="6.1.1.3" evidence="1"/>
<dbReference type="EMBL" id="CP000671">
    <property type="protein sequence ID" value="ABQ98276.1"/>
    <property type="molecule type" value="Genomic_DNA"/>
</dbReference>
<dbReference type="SMR" id="A5UBX5"/>
<dbReference type="KEGG" id="hip:CGSHiEE_04375"/>
<dbReference type="HOGENOM" id="CLU_008554_0_1_6"/>
<dbReference type="GO" id="GO:0005829">
    <property type="term" value="C:cytosol"/>
    <property type="evidence" value="ECO:0007669"/>
    <property type="project" value="TreeGrafter"/>
</dbReference>
<dbReference type="GO" id="GO:0005524">
    <property type="term" value="F:ATP binding"/>
    <property type="evidence" value="ECO:0007669"/>
    <property type="project" value="UniProtKB-UniRule"/>
</dbReference>
<dbReference type="GO" id="GO:0046872">
    <property type="term" value="F:metal ion binding"/>
    <property type="evidence" value="ECO:0007669"/>
    <property type="project" value="UniProtKB-KW"/>
</dbReference>
<dbReference type="GO" id="GO:0004829">
    <property type="term" value="F:threonine-tRNA ligase activity"/>
    <property type="evidence" value="ECO:0007669"/>
    <property type="project" value="UniProtKB-UniRule"/>
</dbReference>
<dbReference type="GO" id="GO:0000049">
    <property type="term" value="F:tRNA binding"/>
    <property type="evidence" value="ECO:0007669"/>
    <property type="project" value="UniProtKB-KW"/>
</dbReference>
<dbReference type="GO" id="GO:0006435">
    <property type="term" value="P:threonyl-tRNA aminoacylation"/>
    <property type="evidence" value="ECO:0007669"/>
    <property type="project" value="UniProtKB-UniRule"/>
</dbReference>
<dbReference type="CDD" id="cd01667">
    <property type="entry name" value="TGS_ThrRS"/>
    <property type="match status" value="1"/>
</dbReference>
<dbReference type="CDD" id="cd00860">
    <property type="entry name" value="ThrRS_anticodon"/>
    <property type="match status" value="1"/>
</dbReference>
<dbReference type="CDD" id="cd00771">
    <property type="entry name" value="ThrRS_core"/>
    <property type="match status" value="1"/>
</dbReference>
<dbReference type="FunFam" id="3.10.20.30:FF:000005">
    <property type="entry name" value="Threonine--tRNA ligase"/>
    <property type="match status" value="1"/>
</dbReference>
<dbReference type="FunFam" id="3.30.54.20:FF:000002">
    <property type="entry name" value="Threonine--tRNA ligase"/>
    <property type="match status" value="1"/>
</dbReference>
<dbReference type="FunFam" id="3.30.930.10:FF:000002">
    <property type="entry name" value="Threonine--tRNA ligase"/>
    <property type="match status" value="1"/>
</dbReference>
<dbReference type="FunFam" id="3.40.50.800:FF:000001">
    <property type="entry name" value="Threonine--tRNA ligase"/>
    <property type="match status" value="1"/>
</dbReference>
<dbReference type="FunFam" id="3.30.980.10:FF:000005">
    <property type="entry name" value="Threonyl-tRNA synthetase, mitochondrial"/>
    <property type="match status" value="1"/>
</dbReference>
<dbReference type="Gene3D" id="3.10.20.30">
    <property type="match status" value="1"/>
</dbReference>
<dbReference type="Gene3D" id="3.30.54.20">
    <property type="match status" value="1"/>
</dbReference>
<dbReference type="Gene3D" id="3.40.50.800">
    <property type="entry name" value="Anticodon-binding domain"/>
    <property type="match status" value="1"/>
</dbReference>
<dbReference type="Gene3D" id="3.30.930.10">
    <property type="entry name" value="Bira Bifunctional Protein, Domain 2"/>
    <property type="match status" value="1"/>
</dbReference>
<dbReference type="Gene3D" id="3.30.980.10">
    <property type="entry name" value="Threonyl-trna Synthetase, Chain A, domain 2"/>
    <property type="match status" value="1"/>
</dbReference>
<dbReference type="HAMAP" id="MF_00184">
    <property type="entry name" value="Thr_tRNA_synth"/>
    <property type="match status" value="1"/>
</dbReference>
<dbReference type="InterPro" id="IPR002314">
    <property type="entry name" value="aa-tRNA-synt_IIb"/>
</dbReference>
<dbReference type="InterPro" id="IPR006195">
    <property type="entry name" value="aa-tRNA-synth_II"/>
</dbReference>
<dbReference type="InterPro" id="IPR045864">
    <property type="entry name" value="aa-tRNA-synth_II/BPL/LPL"/>
</dbReference>
<dbReference type="InterPro" id="IPR004154">
    <property type="entry name" value="Anticodon-bd"/>
</dbReference>
<dbReference type="InterPro" id="IPR036621">
    <property type="entry name" value="Anticodon-bd_dom_sf"/>
</dbReference>
<dbReference type="InterPro" id="IPR012675">
    <property type="entry name" value="Beta-grasp_dom_sf"/>
</dbReference>
<dbReference type="InterPro" id="IPR004095">
    <property type="entry name" value="TGS"/>
</dbReference>
<dbReference type="InterPro" id="IPR012676">
    <property type="entry name" value="TGS-like"/>
</dbReference>
<dbReference type="InterPro" id="IPR002320">
    <property type="entry name" value="Thr-tRNA-ligase_IIa"/>
</dbReference>
<dbReference type="InterPro" id="IPR018163">
    <property type="entry name" value="Thr/Ala-tRNA-synth_IIc_edit"/>
</dbReference>
<dbReference type="InterPro" id="IPR047246">
    <property type="entry name" value="ThrRS_anticodon"/>
</dbReference>
<dbReference type="InterPro" id="IPR033728">
    <property type="entry name" value="ThrRS_core"/>
</dbReference>
<dbReference type="InterPro" id="IPR012947">
    <property type="entry name" value="tRNA_SAD"/>
</dbReference>
<dbReference type="NCBIfam" id="TIGR00418">
    <property type="entry name" value="thrS"/>
    <property type="match status" value="1"/>
</dbReference>
<dbReference type="PANTHER" id="PTHR11451:SF44">
    <property type="entry name" value="THREONINE--TRNA LIGASE, CHLOROPLASTIC_MITOCHONDRIAL 2"/>
    <property type="match status" value="1"/>
</dbReference>
<dbReference type="PANTHER" id="PTHR11451">
    <property type="entry name" value="THREONINE-TRNA LIGASE"/>
    <property type="match status" value="1"/>
</dbReference>
<dbReference type="Pfam" id="PF03129">
    <property type="entry name" value="HGTP_anticodon"/>
    <property type="match status" value="1"/>
</dbReference>
<dbReference type="Pfam" id="PF02824">
    <property type="entry name" value="TGS"/>
    <property type="match status" value="1"/>
</dbReference>
<dbReference type="Pfam" id="PF00587">
    <property type="entry name" value="tRNA-synt_2b"/>
    <property type="match status" value="1"/>
</dbReference>
<dbReference type="Pfam" id="PF07973">
    <property type="entry name" value="tRNA_SAD"/>
    <property type="match status" value="1"/>
</dbReference>
<dbReference type="PRINTS" id="PR01047">
    <property type="entry name" value="TRNASYNTHTHR"/>
</dbReference>
<dbReference type="SMART" id="SM00863">
    <property type="entry name" value="tRNA_SAD"/>
    <property type="match status" value="1"/>
</dbReference>
<dbReference type="SUPFAM" id="SSF52954">
    <property type="entry name" value="Class II aaRS ABD-related"/>
    <property type="match status" value="1"/>
</dbReference>
<dbReference type="SUPFAM" id="SSF55681">
    <property type="entry name" value="Class II aaRS and biotin synthetases"/>
    <property type="match status" value="1"/>
</dbReference>
<dbReference type="SUPFAM" id="SSF81271">
    <property type="entry name" value="TGS-like"/>
    <property type="match status" value="1"/>
</dbReference>
<dbReference type="SUPFAM" id="SSF55186">
    <property type="entry name" value="ThrRS/AlaRS common domain"/>
    <property type="match status" value="1"/>
</dbReference>
<dbReference type="PROSITE" id="PS50862">
    <property type="entry name" value="AA_TRNA_LIGASE_II"/>
    <property type="match status" value="1"/>
</dbReference>
<dbReference type="PROSITE" id="PS51880">
    <property type="entry name" value="TGS"/>
    <property type="match status" value="1"/>
</dbReference>
<accession>A5UBX5</accession>
<sequence length="643" mass="73604">MPIITLPDGSQRQFDHPVSVLEVAQDIGAGLAKATIAGRVNGERRDACDVIEQDATLEIITAKDEDGLEIIRHSCAHLLGHAIKQLFPDVKMAIGPTIENGFYYDVDLDRSLTQEDIDAIEKRMLELAKTNYDVVKKRVTWQEARDTFEKRGEPYKMAILDENIERTATPALYHHLEYIDMCRGPHVPNMRFCQHFKLQKVAGAYWRGDSKNKMLQRIYGTAWADKKQLAEYLTRLEEAAKRDHRKIGKALDLYHMQEEAPGMVFWHNDGWTIFRELETFVRTKLKQYDYQEVKGPFMMDRVLWEKTGHWQNYADLMFTTQSENREYAIKPMNCPGHVQIFNQGLKSYRDLPIRMAEFGSCHRNEPSGSLHGLMRVRGFTQDDAHIFCTEDQIESEVTSCIKMVYDIYSTFGFTNIAVKLSTRPENRIGSDEMWDRAEAGLAAALAHNGLEYEIQEGEGAFYGPKIEFALRDCLGREWQCGTVQLDFALPGRLDATYVAEDNSRKTPVMIHRAILGSIERFIGIITEEYAGFFPAWLAPTQAVVMNITDSQSDYVQQVVKTLSDAGLRVKADLRNEKVGFKIREHTLRRVPYMLVCGDKEIAEGKVAVRTRKGADLGTFTVEEFAEILKNQVRSRELKLLNEE</sequence>
<protein>
    <recommendedName>
        <fullName evidence="1">Threonine--tRNA ligase</fullName>
        <ecNumber evidence="1">6.1.1.3</ecNumber>
    </recommendedName>
    <alternativeName>
        <fullName evidence="1">Threonyl-tRNA synthetase</fullName>
        <shortName evidence="1">ThrRS</shortName>
    </alternativeName>
</protein>
<keyword id="KW-0030">Aminoacyl-tRNA synthetase</keyword>
<keyword id="KW-0067">ATP-binding</keyword>
<keyword id="KW-0963">Cytoplasm</keyword>
<keyword id="KW-0436">Ligase</keyword>
<keyword id="KW-0479">Metal-binding</keyword>
<keyword id="KW-0547">Nucleotide-binding</keyword>
<keyword id="KW-0648">Protein biosynthesis</keyword>
<keyword id="KW-0694">RNA-binding</keyword>
<keyword id="KW-0820">tRNA-binding</keyword>
<keyword id="KW-0862">Zinc</keyword>
<evidence type="ECO:0000255" key="1">
    <source>
        <dbReference type="HAMAP-Rule" id="MF_00184"/>
    </source>
</evidence>
<evidence type="ECO:0000255" key="2">
    <source>
        <dbReference type="PROSITE-ProRule" id="PRU01228"/>
    </source>
</evidence>
<comment type="function">
    <text evidence="1">Catalyzes the attachment of threonine to tRNA(Thr) in a two-step reaction: L-threonine is first activated by ATP to form Thr-AMP and then transferred to the acceptor end of tRNA(Thr). Also edits incorrectly charged L-seryl-tRNA(Thr).</text>
</comment>
<comment type="catalytic activity">
    <reaction evidence="1">
        <text>tRNA(Thr) + L-threonine + ATP = L-threonyl-tRNA(Thr) + AMP + diphosphate + H(+)</text>
        <dbReference type="Rhea" id="RHEA:24624"/>
        <dbReference type="Rhea" id="RHEA-COMP:9670"/>
        <dbReference type="Rhea" id="RHEA-COMP:9704"/>
        <dbReference type="ChEBI" id="CHEBI:15378"/>
        <dbReference type="ChEBI" id="CHEBI:30616"/>
        <dbReference type="ChEBI" id="CHEBI:33019"/>
        <dbReference type="ChEBI" id="CHEBI:57926"/>
        <dbReference type="ChEBI" id="CHEBI:78442"/>
        <dbReference type="ChEBI" id="CHEBI:78534"/>
        <dbReference type="ChEBI" id="CHEBI:456215"/>
        <dbReference type="EC" id="6.1.1.3"/>
    </reaction>
</comment>
<comment type="cofactor">
    <cofactor evidence="1">
        <name>Zn(2+)</name>
        <dbReference type="ChEBI" id="CHEBI:29105"/>
    </cofactor>
    <text evidence="1">Binds 1 zinc ion per subunit.</text>
</comment>
<comment type="subunit">
    <text evidence="1">Homodimer.</text>
</comment>
<comment type="subcellular location">
    <subcellularLocation>
        <location evidence="1">Cytoplasm</location>
    </subcellularLocation>
</comment>
<comment type="similarity">
    <text evidence="1">Belongs to the class-II aminoacyl-tRNA synthetase family.</text>
</comment>
<reference key="1">
    <citation type="journal article" date="2007" name="Genome Biol.">
        <title>Characterization and modeling of the Haemophilus influenzae core and supragenomes based on the complete genomic sequences of Rd and 12 clinical nontypeable strains.</title>
        <authorList>
            <person name="Hogg J.S."/>
            <person name="Hu F.Z."/>
            <person name="Janto B."/>
            <person name="Boissy R."/>
            <person name="Hayes J."/>
            <person name="Keefe R."/>
            <person name="Post J.C."/>
            <person name="Ehrlich G.D."/>
        </authorList>
    </citation>
    <scope>NUCLEOTIDE SEQUENCE [LARGE SCALE GENOMIC DNA]</scope>
    <source>
        <strain>PittEE</strain>
    </source>
</reference>
<feature type="chain" id="PRO_1000020398" description="Threonine--tRNA ligase">
    <location>
        <begin position="1"/>
        <end position="643"/>
    </location>
</feature>
<feature type="domain" description="TGS" evidence="2">
    <location>
        <begin position="1"/>
        <end position="61"/>
    </location>
</feature>
<feature type="region of interest" description="Catalytic" evidence="1">
    <location>
        <begin position="243"/>
        <end position="534"/>
    </location>
</feature>
<feature type="binding site" evidence="1">
    <location>
        <position position="334"/>
    </location>
    <ligand>
        <name>Zn(2+)</name>
        <dbReference type="ChEBI" id="CHEBI:29105"/>
    </ligand>
</feature>
<feature type="binding site" evidence="1">
    <location>
        <position position="385"/>
    </location>
    <ligand>
        <name>Zn(2+)</name>
        <dbReference type="ChEBI" id="CHEBI:29105"/>
    </ligand>
</feature>
<feature type="binding site" evidence="1">
    <location>
        <position position="511"/>
    </location>
    <ligand>
        <name>Zn(2+)</name>
        <dbReference type="ChEBI" id="CHEBI:29105"/>
    </ligand>
</feature>